<feature type="chain" id="PRO_0000326146" description="Protein lifeguard 2">
    <location>
        <begin position="1"/>
        <end position="316"/>
    </location>
</feature>
<feature type="transmembrane region" description="Helical" evidence="2">
    <location>
        <begin position="106"/>
        <end position="126"/>
    </location>
</feature>
<feature type="transmembrane region" description="Helical" evidence="2">
    <location>
        <begin position="138"/>
        <end position="158"/>
    </location>
</feature>
<feature type="transmembrane region" description="Helical" evidence="2">
    <location>
        <begin position="165"/>
        <end position="185"/>
    </location>
</feature>
<feature type="transmembrane region" description="Helical" evidence="2">
    <location>
        <begin position="194"/>
        <end position="214"/>
    </location>
</feature>
<feature type="transmembrane region" description="Helical" evidence="2">
    <location>
        <begin position="225"/>
        <end position="245"/>
    </location>
</feature>
<feature type="transmembrane region" description="Helical" evidence="2">
    <location>
        <begin position="250"/>
        <end position="270"/>
    </location>
</feature>
<feature type="transmembrane region" description="Helical" evidence="2">
    <location>
        <begin position="290"/>
        <end position="310"/>
    </location>
</feature>
<feature type="region of interest" description="Disordered" evidence="3">
    <location>
        <begin position="1"/>
        <end position="53"/>
    </location>
</feature>
<feature type="glycosylation site" description="N-linked (GlcNAc...) asparagine" evidence="2">
    <location>
        <position position="191"/>
    </location>
</feature>
<reference key="1">
    <citation type="submission" date="2004-11" db="EMBL/GenBank/DDBJ databases">
        <authorList>
            <consortium name="The German cDNA consortium"/>
        </authorList>
    </citation>
    <scope>NUCLEOTIDE SEQUENCE [LARGE SCALE MRNA]</scope>
    <source>
        <tissue>Brain cortex</tissue>
    </source>
</reference>
<gene>
    <name type="primary">FAIM2</name>
    <name type="synonym">LFG2</name>
</gene>
<protein>
    <recommendedName>
        <fullName>Protein lifeguard 2</fullName>
    </recommendedName>
    <alternativeName>
        <fullName>Fas apoptotic inhibitory molecule 2</fullName>
    </alternativeName>
</protein>
<comment type="function">
    <text evidence="1">Antiapoptotic protein which protects cells uniquely from Fas-induced apoptosis. Regulates Fas-mediated apoptosis in neurons by interfering with caspase-8 activation. Plays a role in cerebellar development by affecting cerebellar size, internal granular layer (IGL) thickness, and Purkinje cell (PC) development (By similarity).</text>
</comment>
<comment type="subunit">
    <text evidence="1">Interacts with FAS/TNFRSF6 and BAX.</text>
</comment>
<comment type="subcellular location">
    <subcellularLocation>
        <location evidence="1">Cell membrane</location>
        <topology evidence="1">Multi-pass membrane protein</topology>
    </subcellularLocation>
    <subcellularLocation>
        <location evidence="1">Membrane raft</location>
    </subcellularLocation>
    <subcellularLocation>
        <location evidence="1">Postsynaptic cell membrane</location>
    </subcellularLocation>
</comment>
<comment type="similarity">
    <text evidence="4">Belongs to the BI1 family. LFG subfamily.</text>
</comment>
<accession>Q5R4I4</accession>
<keyword id="KW-0053">Apoptosis</keyword>
<keyword id="KW-1003">Cell membrane</keyword>
<keyword id="KW-0325">Glycoprotein</keyword>
<keyword id="KW-0472">Membrane</keyword>
<keyword id="KW-0628">Postsynaptic cell membrane</keyword>
<keyword id="KW-1185">Reference proteome</keyword>
<keyword id="KW-0770">Synapse</keyword>
<keyword id="KW-0812">Transmembrane</keyword>
<keyword id="KW-1133">Transmembrane helix</keyword>
<evidence type="ECO:0000250" key="1"/>
<evidence type="ECO:0000255" key="2"/>
<evidence type="ECO:0000256" key="3">
    <source>
        <dbReference type="SAM" id="MobiDB-lite"/>
    </source>
</evidence>
<evidence type="ECO:0000305" key="4"/>
<organism>
    <name type="scientific">Pongo abelii</name>
    <name type="common">Sumatran orangutan</name>
    <name type="synonym">Pongo pygmaeus abelii</name>
    <dbReference type="NCBI Taxonomy" id="9601"/>
    <lineage>
        <taxon>Eukaryota</taxon>
        <taxon>Metazoa</taxon>
        <taxon>Chordata</taxon>
        <taxon>Craniata</taxon>
        <taxon>Vertebrata</taxon>
        <taxon>Euteleostomi</taxon>
        <taxon>Mammalia</taxon>
        <taxon>Eutheria</taxon>
        <taxon>Euarchontoglires</taxon>
        <taxon>Primates</taxon>
        <taxon>Haplorrhini</taxon>
        <taxon>Catarrhini</taxon>
        <taxon>Hominidae</taxon>
        <taxon>Pongo</taxon>
    </lineage>
</organism>
<sequence length="316" mass="35094">MTQGKLSVANKAPGTEGQQQVHGEKKEAPAVPSAPPSYEEATSGEGMKAGAFPPAPTAVPLHPSWAYVDPSSSSSYDNGFPTGDHELFTTFSWDDQKVRRVFVRKVYTILLIQLLVTLAVVALFTFCDPVKDYVQANPGWYWASYAVFFATYLTLACCSGPRRHFPWNLILLTVFTLSMAYLTGMLSSYYNTTSVLLCLGITALVCLSVTVFSFQTKFDFTSCQGVLFVLPMTLFFSGLILAILLPFQYVPWLHAVYAALGAGVFTLFLALDTQLLMGNRRHSLSPEEYIFGALNIYLDIIYIFTFFLQLFGTNRE</sequence>
<proteinExistence type="evidence at transcript level"/>
<dbReference type="EMBL" id="CR861264">
    <property type="protein sequence ID" value="CAH93332.1"/>
    <property type="molecule type" value="mRNA"/>
</dbReference>
<dbReference type="RefSeq" id="NP_001126961.1">
    <property type="nucleotide sequence ID" value="NM_001133489.1"/>
</dbReference>
<dbReference type="SMR" id="Q5R4I4"/>
<dbReference type="STRING" id="9601.ENSPPYP00000005137"/>
<dbReference type="GlyCosmos" id="Q5R4I4">
    <property type="glycosylation" value="1 site, No reported glycans"/>
</dbReference>
<dbReference type="GeneID" id="100173980"/>
<dbReference type="KEGG" id="pon:100173980"/>
<dbReference type="CTD" id="23017"/>
<dbReference type="eggNOG" id="KOG2322">
    <property type="taxonomic scope" value="Eukaryota"/>
</dbReference>
<dbReference type="InParanoid" id="Q5R4I4"/>
<dbReference type="OrthoDB" id="7933078at2759"/>
<dbReference type="Proteomes" id="UP000001595">
    <property type="component" value="Unplaced"/>
</dbReference>
<dbReference type="GO" id="GO:0005783">
    <property type="term" value="C:endoplasmic reticulum"/>
    <property type="evidence" value="ECO:0007669"/>
    <property type="project" value="TreeGrafter"/>
</dbReference>
<dbReference type="GO" id="GO:0005794">
    <property type="term" value="C:Golgi apparatus"/>
    <property type="evidence" value="ECO:0007669"/>
    <property type="project" value="TreeGrafter"/>
</dbReference>
<dbReference type="GO" id="GO:0045121">
    <property type="term" value="C:membrane raft"/>
    <property type="evidence" value="ECO:0000250"/>
    <property type="project" value="UniProtKB"/>
</dbReference>
<dbReference type="GO" id="GO:0045211">
    <property type="term" value="C:postsynaptic membrane"/>
    <property type="evidence" value="ECO:0007669"/>
    <property type="project" value="UniProtKB-SubCell"/>
</dbReference>
<dbReference type="GO" id="GO:0006915">
    <property type="term" value="P:apoptotic process"/>
    <property type="evidence" value="ECO:0007669"/>
    <property type="project" value="UniProtKB-KW"/>
</dbReference>
<dbReference type="GO" id="GO:0021681">
    <property type="term" value="P:cerebellar granular layer development"/>
    <property type="evidence" value="ECO:0000250"/>
    <property type="project" value="UniProtKB"/>
</dbReference>
<dbReference type="GO" id="GO:0021702">
    <property type="term" value="P:cerebellar Purkinje cell differentiation"/>
    <property type="evidence" value="ECO:0000250"/>
    <property type="project" value="UniProtKB"/>
</dbReference>
<dbReference type="GO" id="GO:0021680">
    <property type="term" value="P:cerebellar Purkinje cell layer development"/>
    <property type="evidence" value="ECO:0000250"/>
    <property type="project" value="UniProtKB"/>
</dbReference>
<dbReference type="GO" id="GO:0021549">
    <property type="term" value="P:cerebellum development"/>
    <property type="evidence" value="ECO:0000250"/>
    <property type="project" value="UniProtKB"/>
</dbReference>
<dbReference type="GO" id="GO:2001234">
    <property type="term" value="P:negative regulation of apoptotic signaling pathway"/>
    <property type="evidence" value="ECO:0007669"/>
    <property type="project" value="TreeGrafter"/>
</dbReference>
<dbReference type="GO" id="GO:0043523">
    <property type="term" value="P:regulation of neuron apoptotic process"/>
    <property type="evidence" value="ECO:0000250"/>
    <property type="project" value="UniProtKB"/>
</dbReference>
<dbReference type="CDD" id="cd10428">
    <property type="entry name" value="LFG_like"/>
    <property type="match status" value="1"/>
</dbReference>
<dbReference type="InterPro" id="IPR006214">
    <property type="entry name" value="Bax_inhibitor_1-related"/>
</dbReference>
<dbReference type="PANTHER" id="PTHR23291">
    <property type="entry name" value="BAX INHIBITOR-RELATED"/>
    <property type="match status" value="1"/>
</dbReference>
<dbReference type="PANTHER" id="PTHR23291:SF18">
    <property type="entry name" value="PROTEIN LIFEGUARD 2"/>
    <property type="match status" value="1"/>
</dbReference>
<dbReference type="Pfam" id="PF01027">
    <property type="entry name" value="Bax1-I"/>
    <property type="match status" value="1"/>
</dbReference>
<name>LFG2_PONAB</name>